<name>Y920_MYCMM</name>
<protein>
    <recommendedName>
        <fullName evidence="1">Nucleotide-binding protein MMAR_0920</fullName>
    </recommendedName>
</protein>
<dbReference type="EMBL" id="CP000854">
    <property type="protein sequence ID" value="ACC39377.1"/>
    <property type="molecule type" value="Genomic_DNA"/>
</dbReference>
<dbReference type="RefSeq" id="WP_011738960.1">
    <property type="nucleotide sequence ID" value="NC_010612.1"/>
</dbReference>
<dbReference type="SMR" id="B2HRR5"/>
<dbReference type="STRING" id="216594.MMAR_0920"/>
<dbReference type="GeneID" id="93438711"/>
<dbReference type="KEGG" id="mmi:MMAR_0920"/>
<dbReference type="eggNOG" id="COG1666">
    <property type="taxonomic scope" value="Bacteria"/>
</dbReference>
<dbReference type="HOGENOM" id="CLU_099839_0_0_11"/>
<dbReference type="OrthoDB" id="9801447at2"/>
<dbReference type="Proteomes" id="UP000001190">
    <property type="component" value="Chromosome"/>
</dbReference>
<dbReference type="GO" id="GO:0005829">
    <property type="term" value="C:cytosol"/>
    <property type="evidence" value="ECO:0007669"/>
    <property type="project" value="TreeGrafter"/>
</dbReference>
<dbReference type="GO" id="GO:0000166">
    <property type="term" value="F:nucleotide binding"/>
    <property type="evidence" value="ECO:0007669"/>
    <property type="project" value="TreeGrafter"/>
</dbReference>
<dbReference type="CDD" id="cd11740">
    <property type="entry name" value="YajQ_like"/>
    <property type="match status" value="1"/>
</dbReference>
<dbReference type="FunFam" id="3.30.70.860:FF:000004">
    <property type="entry name" value="UPF0234 protein AWC22_11905"/>
    <property type="match status" value="1"/>
</dbReference>
<dbReference type="FunFam" id="3.30.70.990:FF:000003">
    <property type="entry name" value="UPF0234 protein MIP_06774"/>
    <property type="match status" value="1"/>
</dbReference>
<dbReference type="Gene3D" id="3.30.70.860">
    <property type="match status" value="1"/>
</dbReference>
<dbReference type="Gene3D" id="3.30.70.990">
    <property type="entry name" value="YajQ-like, domain 2"/>
    <property type="match status" value="1"/>
</dbReference>
<dbReference type="HAMAP" id="MF_00632">
    <property type="entry name" value="YajQ"/>
    <property type="match status" value="1"/>
</dbReference>
<dbReference type="InterPro" id="IPR007551">
    <property type="entry name" value="DUF520"/>
</dbReference>
<dbReference type="InterPro" id="IPR035571">
    <property type="entry name" value="UPF0234-like_C"/>
</dbReference>
<dbReference type="InterPro" id="IPR035570">
    <property type="entry name" value="UPF0234_N"/>
</dbReference>
<dbReference type="InterPro" id="IPR036183">
    <property type="entry name" value="YajQ-like_sf"/>
</dbReference>
<dbReference type="NCBIfam" id="NF003819">
    <property type="entry name" value="PRK05412.1"/>
    <property type="match status" value="1"/>
</dbReference>
<dbReference type="PANTHER" id="PTHR30476">
    <property type="entry name" value="UPF0234 PROTEIN YAJQ"/>
    <property type="match status" value="1"/>
</dbReference>
<dbReference type="PANTHER" id="PTHR30476:SF0">
    <property type="entry name" value="UPF0234 PROTEIN YAJQ"/>
    <property type="match status" value="1"/>
</dbReference>
<dbReference type="Pfam" id="PF04461">
    <property type="entry name" value="DUF520"/>
    <property type="match status" value="1"/>
</dbReference>
<dbReference type="SUPFAM" id="SSF89963">
    <property type="entry name" value="YajQ-like"/>
    <property type="match status" value="2"/>
</dbReference>
<keyword id="KW-0547">Nucleotide-binding</keyword>
<keyword id="KW-1185">Reference proteome</keyword>
<reference key="1">
    <citation type="journal article" date="2008" name="Genome Res.">
        <title>Insights from the complete genome sequence of Mycobacterium marinum on the evolution of Mycobacterium tuberculosis.</title>
        <authorList>
            <person name="Stinear T.P."/>
            <person name="Seemann T."/>
            <person name="Harrison P.F."/>
            <person name="Jenkin G.A."/>
            <person name="Davies J.K."/>
            <person name="Johnson P.D."/>
            <person name="Abdellah Z."/>
            <person name="Arrowsmith C."/>
            <person name="Chillingworth T."/>
            <person name="Churcher C."/>
            <person name="Clarke K."/>
            <person name="Cronin A."/>
            <person name="Davis P."/>
            <person name="Goodhead I."/>
            <person name="Holroyd N."/>
            <person name="Jagels K."/>
            <person name="Lord A."/>
            <person name="Moule S."/>
            <person name="Mungall K."/>
            <person name="Norbertczak H."/>
            <person name="Quail M.A."/>
            <person name="Rabbinowitsch E."/>
            <person name="Walker D."/>
            <person name="White B."/>
            <person name="Whitehead S."/>
            <person name="Small P.L."/>
            <person name="Brosch R."/>
            <person name="Ramakrishnan L."/>
            <person name="Fischbach M.A."/>
            <person name="Parkhill J."/>
            <person name="Cole S.T."/>
        </authorList>
    </citation>
    <scope>NUCLEOTIDE SEQUENCE [LARGE SCALE GENOMIC DNA]</scope>
    <source>
        <strain>ATCC BAA-535 / M</strain>
    </source>
</reference>
<feature type="chain" id="PRO_1000130637" description="Nucleotide-binding protein MMAR_0920">
    <location>
        <begin position="1"/>
        <end position="163"/>
    </location>
</feature>
<comment type="function">
    <text evidence="1">Nucleotide-binding protein.</text>
</comment>
<comment type="similarity">
    <text evidence="1">Belongs to the YajQ family.</text>
</comment>
<evidence type="ECO:0000255" key="1">
    <source>
        <dbReference type="HAMAP-Rule" id="MF_00632"/>
    </source>
</evidence>
<organism>
    <name type="scientific">Mycobacterium marinum (strain ATCC BAA-535 / M)</name>
    <dbReference type="NCBI Taxonomy" id="216594"/>
    <lineage>
        <taxon>Bacteria</taxon>
        <taxon>Bacillati</taxon>
        <taxon>Actinomycetota</taxon>
        <taxon>Actinomycetes</taxon>
        <taxon>Mycobacteriales</taxon>
        <taxon>Mycobacteriaceae</taxon>
        <taxon>Mycobacterium</taxon>
        <taxon>Mycobacterium ulcerans group</taxon>
    </lineage>
</organism>
<sequence length="163" mass="18108">MADSSFDIVSKVDHQEVDNALNQAAKELATRFDFRGTDTKIAWKGDEAVELTSSTEERVKAAVDVFKEKLIRRDISMKAFDAGEPQASGKTYKVTGDIKQGISGDDAKKITKLVRDEGPKGVKTQIQGEEIRVTSKKRDDLQTVIAMLKQADLDVALQFVNYR</sequence>
<proteinExistence type="inferred from homology"/>
<gene>
    <name type="ordered locus">MMAR_0920</name>
</gene>
<accession>B2HRR5</accession>